<organism>
    <name type="scientific">Mus musculus</name>
    <name type="common">Mouse</name>
    <dbReference type="NCBI Taxonomy" id="10090"/>
    <lineage>
        <taxon>Eukaryota</taxon>
        <taxon>Metazoa</taxon>
        <taxon>Chordata</taxon>
        <taxon>Craniata</taxon>
        <taxon>Vertebrata</taxon>
        <taxon>Euteleostomi</taxon>
        <taxon>Mammalia</taxon>
        <taxon>Eutheria</taxon>
        <taxon>Euarchontoglires</taxon>
        <taxon>Glires</taxon>
        <taxon>Rodentia</taxon>
        <taxon>Myomorpha</taxon>
        <taxon>Muroidea</taxon>
        <taxon>Muridae</taxon>
        <taxon>Murinae</taxon>
        <taxon>Mus</taxon>
        <taxon>Mus</taxon>
    </lineage>
</organism>
<comment type="function">
    <text evidence="1">Involved in EGFR signaling.</text>
</comment>
<comment type="subunit">
    <text evidence="6">Interacts with RNF126.</text>
</comment>
<comment type="subcellular location">
    <subcellularLocation>
        <location evidence="5">Cytoplasm</location>
    </subcellularLocation>
    <text>Associated with microtubules of the cytoskeleton and mitotic apparatus.</text>
</comment>
<comment type="alternative products">
    <event type="alternative splicing"/>
    <isoform>
        <id>Q810U5-1</id>
        <name>1</name>
        <sequence type="displayed"/>
    </isoform>
    <isoform>
        <id>Q810U5-2</id>
        <name>2</name>
        <sequence type="described" ref="VSP_014986"/>
    </isoform>
    <isoform>
        <id>Q810U5-3</id>
        <name>3</name>
        <sequence type="described" ref="VSP_014987"/>
    </isoform>
</comment>
<comment type="tissue specificity">
    <text evidence="5">Widely expressed.</text>
</comment>
<comment type="developmental stage">
    <text evidence="5">At 14.5 dpc, strong punctate expression in the otic mesenchyme. Detected in the cells lining the lumen of the primitive cochlear duct and in the nerve fibers of the spiral ganglion, as well as in the nerve fibers invading the cochlear epithelium. At 17.5 dpc, detected only in the mesenchyme around the cochlear duct. 2 days after birth (P2), the mesenchymal expression becomes weaker, except in the region of the spiral limbus, while expression is observed for the first time in the apical region of the developing pillar cells (PCs). Also observed in the cytoplasm of outer hair cells, in their innervating nerve fibers and in the marginal cells of stria vascularis. At P9 and P12, detected in the stria vascularis and strongly through the entire length of the inner and outer PCs. At these stages, in tissues of mesenchymal origin, restricted to the spiral limbus and the spiral ligament. At P14 and P16, strong expression is maintained in the PCs and in the marginal cells of the stria vascularis, weak expression in the spiral limbus and ligament. Also detected in Deiter's cells. At P19 and P22, intense expression in the PCs and stria vascularis, as well as in the cell bodies and processes of Deiter's cells. Weak expression in the spiral limbus and ligament. At P31, when the inner ear is functionally mature, expressed only in the PCs and stria vascularis. At P69, strong expression in the PCs and less intense in stria vascularis. In the vestibular maculae and the cristae ampullaris, expression similar to that observed in the cochlea: strong signal in the mesenchyme at the initial embryonic stages that progressively becomes weaker and is less prominent in the adult (P33). At 17.5 dpc and P2, observed in nerve fibers innervating the sensory epithelia. Expression in the vestibular epithelium starts at 17.5 dpc and is readily detected at P2. Later expression increases and persists in adult stages in which it is restricted to the apical cytoplasm of the epithelial cells (at protein level).</text>
</comment>
<comment type="PTM">
    <text evidence="1">Phosphorylated on tyrosine residues.</text>
</comment>
<comment type="sequence caution" evidence="8">
    <conflict type="frameshift">
        <sequence resource="EMBL-CDS" id="BAB28089"/>
    </conflict>
</comment>
<dbReference type="EMBL" id="AJ534985">
    <property type="protein sequence ID" value="CAD59434.1"/>
    <property type="molecule type" value="mRNA"/>
</dbReference>
<dbReference type="EMBL" id="AK012190">
    <property type="protein sequence ID" value="BAB28089.1"/>
    <property type="status" value="ALT_FRAME"/>
    <property type="molecule type" value="mRNA"/>
</dbReference>
<dbReference type="EMBL" id="AK016827">
    <property type="protein sequence ID" value="BAB30453.1"/>
    <property type="molecule type" value="mRNA"/>
</dbReference>
<dbReference type="EMBL" id="AK077557">
    <property type="protein sequence ID" value="BAC36861.1"/>
    <property type="molecule type" value="mRNA"/>
</dbReference>
<dbReference type="EMBL" id="AK151672">
    <property type="protein sequence ID" value="BAE30598.1"/>
    <property type="molecule type" value="mRNA"/>
</dbReference>
<dbReference type="EMBL" id="AK162434">
    <property type="protein sequence ID" value="BAE36915.1"/>
    <property type="molecule type" value="mRNA"/>
</dbReference>
<dbReference type="EMBL" id="CT010568">
    <property type="status" value="NOT_ANNOTATED_CDS"/>
    <property type="molecule type" value="Genomic_DNA"/>
</dbReference>
<dbReference type="CCDS" id="CCDS37305.1">
    <molecule id="Q810U5-1"/>
</dbReference>
<dbReference type="CCDS" id="CCDS37306.1">
    <molecule id="Q810U5-2"/>
</dbReference>
<dbReference type="RefSeq" id="NP_001020786.1">
    <molecule id="Q810U5-2"/>
    <property type="nucleotide sequence ID" value="NM_001025615.3"/>
</dbReference>
<dbReference type="RefSeq" id="NP_001276365.1">
    <property type="nucleotide sequence ID" value="NM_001289436.1"/>
</dbReference>
<dbReference type="RefSeq" id="NP_080478.2">
    <molecule id="Q810U5-1"/>
    <property type="nucleotide sequence ID" value="NM_026202.4"/>
</dbReference>
<dbReference type="SMR" id="Q810U5"/>
<dbReference type="BioGRID" id="212232">
    <property type="interactions" value="8"/>
</dbReference>
<dbReference type="FunCoup" id="Q810U5">
    <property type="interactions" value="1203"/>
</dbReference>
<dbReference type="STRING" id="10090.ENSMUSP00000097604"/>
<dbReference type="iPTMnet" id="Q810U5"/>
<dbReference type="PhosphoSitePlus" id="Q810U5"/>
<dbReference type="PaxDb" id="10090-ENSMUSP00000097604"/>
<dbReference type="ProteomicsDB" id="281308">
    <molecule id="Q810U5-1"/>
</dbReference>
<dbReference type="ProteomicsDB" id="281309">
    <molecule id="Q810U5-2"/>
</dbReference>
<dbReference type="ProteomicsDB" id="281310">
    <molecule id="Q810U5-3"/>
</dbReference>
<dbReference type="Pumba" id="Q810U5"/>
<dbReference type="Antibodypedia" id="722">
    <property type="antibodies" value="232 antibodies from 29 providers"/>
</dbReference>
<dbReference type="DNASU" id="67501"/>
<dbReference type="Ensembl" id="ENSMUST00000039443.14">
    <molecule id="Q810U5-3"/>
    <property type="protein sequence ID" value="ENSMUSP00000038509.8"/>
    <property type="gene ID" value="ENSMUSG00000038127.16"/>
</dbReference>
<dbReference type="Ensembl" id="ENSMUST00000096127.11">
    <molecule id="Q810U5-2"/>
    <property type="protein sequence ID" value="ENSMUSP00000093841.5"/>
    <property type="gene ID" value="ENSMUSG00000038127.16"/>
</dbReference>
<dbReference type="Ensembl" id="ENSMUST00000100026.10">
    <molecule id="Q810U5-1"/>
    <property type="protein sequence ID" value="ENSMUSP00000097604.4"/>
    <property type="gene ID" value="ENSMUSG00000038127.16"/>
</dbReference>
<dbReference type="GeneID" id="67501"/>
<dbReference type="KEGG" id="mmu:67501"/>
<dbReference type="UCSC" id="uc007yvn.3">
    <molecule id="Q810U5-1"/>
    <property type="organism name" value="mouse"/>
</dbReference>
<dbReference type="AGR" id="MGI:1914751"/>
<dbReference type="CTD" id="152137"/>
<dbReference type="MGI" id="MGI:1914751">
    <property type="gene designation" value="Ccdc50"/>
</dbReference>
<dbReference type="VEuPathDB" id="HostDB:ENSMUSG00000038127"/>
<dbReference type="eggNOG" id="ENOG502S0GI">
    <property type="taxonomic scope" value="Eukaryota"/>
</dbReference>
<dbReference type="GeneTree" id="ENSGT00390000011058"/>
<dbReference type="HOGENOM" id="CLU_032371_0_0_1"/>
<dbReference type="InParanoid" id="Q810U5"/>
<dbReference type="OrthoDB" id="9994767at2759"/>
<dbReference type="PhylomeDB" id="Q810U5"/>
<dbReference type="TreeFam" id="TF325391"/>
<dbReference type="BioGRID-ORCS" id="67501">
    <property type="hits" value="0 hits in 76 CRISPR screens"/>
</dbReference>
<dbReference type="ChiTaRS" id="Ccdc50">
    <property type="organism name" value="mouse"/>
</dbReference>
<dbReference type="PRO" id="PR:Q810U5"/>
<dbReference type="Proteomes" id="UP000000589">
    <property type="component" value="Chromosome 16"/>
</dbReference>
<dbReference type="RNAct" id="Q810U5">
    <property type="molecule type" value="protein"/>
</dbReference>
<dbReference type="Bgee" id="ENSMUSG00000038127">
    <property type="expression patterns" value="Expressed in embryonic post-anal tail and 254 other cell types or tissues"/>
</dbReference>
<dbReference type="ExpressionAtlas" id="Q810U5">
    <property type="expression patterns" value="baseline and differential"/>
</dbReference>
<dbReference type="GO" id="GO:0005737">
    <property type="term" value="C:cytoplasm"/>
    <property type="evidence" value="ECO:0000314"/>
    <property type="project" value="MGI"/>
</dbReference>
<dbReference type="GO" id="GO:0015630">
    <property type="term" value="C:microtubule cytoskeleton"/>
    <property type="evidence" value="ECO:0000314"/>
    <property type="project" value="MGI"/>
</dbReference>
<dbReference type="GO" id="GO:0007605">
    <property type="term" value="P:sensory perception of sound"/>
    <property type="evidence" value="ECO:0000266"/>
    <property type="project" value="MGI"/>
</dbReference>
<dbReference type="InterPro" id="IPR039303">
    <property type="entry name" value="CCDC50"/>
</dbReference>
<dbReference type="InterPro" id="IPR029311">
    <property type="entry name" value="CCDC50_N"/>
</dbReference>
<dbReference type="PANTHER" id="PTHR22115">
    <property type="entry name" value="C3ORF6 PROTEIN-RELATED"/>
    <property type="match status" value="1"/>
</dbReference>
<dbReference type="PANTHER" id="PTHR22115:SF1">
    <property type="entry name" value="COILED-COIL DOMAIN-CONTAINING PROTEIN 50"/>
    <property type="match status" value="1"/>
</dbReference>
<dbReference type="Pfam" id="PF15295">
    <property type="entry name" value="CCDC50_N"/>
    <property type="match status" value="1"/>
</dbReference>
<sequence length="305" mass="35321">MADVSVDQSKLPGVKEVCRDFAVLEDHTLAHSLQEQEIEHHLASNIQRNRLVQHDLQVAKQLQEEDLKAQAQLQKRYKALEQHDCEIAQEIQEKLTIEAERRRIQEKKDEDIARLLQEKELQEEKRRKKHTPEFSGGSVFGDNYYHEDGGMKPRGIKEAVSTPARASHRDQEWYDAEIARKLQEEELLATHVDMRAAQVAQDEEIARLLMAEEKKAYKKAKEREKSSLDKRKHDPECKLKAKSAHSKSKEGDEAHRSKIDRPSRPPPPTMMGLEDTDPTHFTNQHSTTWHLPKSESSQKGFHNKQ</sequence>
<proteinExistence type="evidence at protein level"/>
<feature type="initiator methionine" description="Removed" evidence="2">
    <location>
        <position position="1"/>
    </location>
</feature>
<feature type="chain" id="PRO_0000066308" description="Coiled-coil domain-containing protein 50">
    <location>
        <begin position="2"/>
        <end position="305"/>
    </location>
</feature>
<feature type="region of interest" description="Disordered" evidence="4">
    <location>
        <begin position="122"/>
        <end position="142"/>
    </location>
</feature>
<feature type="region of interest" description="Disordered" evidence="4">
    <location>
        <begin position="218"/>
        <end position="305"/>
    </location>
</feature>
<feature type="coiled-coil region" evidence="3">
    <location>
        <begin position="86"/>
        <end position="130"/>
    </location>
</feature>
<feature type="compositionally biased region" description="Basic and acidic residues" evidence="4">
    <location>
        <begin position="218"/>
        <end position="239"/>
    </location>
</feature>
<feature type="compositionally biased region" description="Basic and acidic residues" evidence="4">
    <location>
        <begin position="247"/>
        <end position="263"/>
    </location>
</feature>
<feature type="compositionally biased region" description="Polar residues" evidence="4">
    <location>
        <begin position="279"/>
        <end position="305"/>
    </location>
</feature>
<feature type="modified residue" description="N-acetylalanine" evidence="2">
    <location>
        <position position="2"/>
    </location>
</feature>
<feature type="modified residue" description="Phosphoserine" evidence="2">
    <location>
        <position position="5"/>
    </location>
</feature>
<feature type="splice variant" id="VSP_014986" description="In isoform 2." evidence="7">
    <location>
        <begin position="189"/>
        <end position="203"/>
    </location>
</feature>
<feature type="splice variant" id="VSP_014987" description="In isoform 3." evidence="7">
    <location>
        <begin position="265"/>
        <end position="305"/>
    </location>
</feature>
<feature type="sequence conflict" description="In Ref. 2; BAC36861." evidence="8" ref="2">
    <original>K</original>
    <variation>N</variation>
    <location>
        <position position="75"/>
    </location>
</feature>
<feature type="sequence conflict" description="In Ref. 2; BAC36861." evidence="8" ref="2">
    <original>P</original>
    <variation>Q</variation>
    <location>
        <position position="153"/>
    </location>
</feature>
<feature type="sequence conflict" description="In Ref. 2; BAC36861." evidence="8" ref="2">
    <original>I</original>
    <variation>N</variation>
    <location>
        <position position="178"/>
    </location>
</feature>
<feature type="sequence conflict" description="In Ref. 2; BAB30453." evidence="8" ref="2">
    <original>G</original>
    <variation>C</variation>
    <location>
        <position position="300"/>
    </location>
</feature>
<protein>
    <recommendedName>
        <fullName>Coiled-coil domain-containing protein 50</fullName>
    </recommendedName>
    <alternativeName>
        <fullName>Protein Ymer</fullName>
    </alternativeName>
</protein>
<reference key="1">
    <citation type="journal article" date="2003" name="Gene">
        <title>Identification and characterization of C3orf6, a new conserved human gene mapping to chromosome 3q28.</title>
        <authorList>
            <person name="Vazza G."/>
            <person name="Picelli S."/>
            <person name="Bozzato A."/>
            <person name="Mostacciuolo M.L."/>
        </authorList>
    </citation>
    <scope>NUCLEOTIDE SEQUENCE [MRNA] (ISOFORM 1)</scope>
    <source>
        <strain>CD-1</strain>
        <tissue>Liver</tissue>
    </source>
</reference>
<reference key="2">
    <citation type="journal article" date="2005" name="Science">
        <title>The transcriptional landscape of the mammalian genome.</title>
        <authorList>
            <person name="Carninci P."/>
            <person name="Kasukawa T."/>
            <person name="Katayama S."/>
            <person name="Gough J."/>
            <person name="Frith M.C."/>
            <person name="Maeda N."/>
            <person name="Oyama R."/>
            <person name="Ravasi T."/>
            <person name="Lenhard B."/>
            <person name="Wells C."/>
            <person name="Kodzius R."/>
            <person name="Shimokawa K."/>
            <person name="Bajic V.B."/>
            <person name="Brenner S.E."/>
            <person name="Batalov S."/>
            <person name="Forrest A.R."/>
            <person name="Zavolan M."/>
            <person name="Davis M.J."/>
            <person name="Wilming L.G."/>
            <person name="Aidinis V."/>
            <person name="Allen J.E."/>
            <person name="Ambesi-Impiombato A."/>
            <person name="Apweiler R."/>
            <person name="Aturaliya R.N."/>
            <person name="Bailey T.L."/>
            <person name="Bansal M."/>
            <person name="Baxter L."/>
            <person name="Beisel K.W."/>
            <person name="Bersano T."/>
            <person name="Bono H."/>
            <person name="Chalk A.M."/>
            <person name="Chiu K.P."/>
            <person name="Choudhary V."/>
            <person name="Christoffels A."/>
            <person name="Clutterbuck D.R."/>
            <person name="Crowe M.L."/>
            <person name="Dalla E."/>
            <person name="Dalrymple B.P."/>
            <person name="de Bono B."/>
            <person name="Della Gatta G."/>
            <person name="di Bernardo D."/>
            <person name="Down T."/>
            <person name="Engstrom P."/>
            <person name="Fagiolini M."/>
            <person name="Faulkner G."/>
            <person name="Fletcher C.F."/>
            <person name="Fukushima T."/>
            <person name="Furuno M."/>
            <person name="Futaki S."/>
            <person name="Gariboldi M."/>
            <person name="Georgii-Hemming P."/>
            <person name="Gingeras T.R."/>
            <person name="Gojobori T."/>
            <person name="Green R.E."/>
            <person name="Gustincich S."/>
            <person name="Harbers M."/>
            <person name="Hayashi Y."/>
            <person name="Hensch T.K."/>
            <person name="Hirokawa N."/>
            <person name="Hill D."/>
            <person name="Huminiecki L."/>
            <person name="Iacono M."/>
            <person name="Ikeo K."/>
            <person name="Iwama A."/>
            <person name="Ishikawa T."/>
            <person name="Jakt M."/>
            <person name="Kanapin A."/>
            <person name="Katoh M."/>
            <person name="Kawasawa Y."/>
            <person name="Kelso J."/>
            <person name="Kitamura H."/>
            <person name="Kitano H."/>
            <person name="Kollias G."/>
            <person name="Krishnan S.P."/>
            <person name="Kruger A."/>
            <person name="Kummerfeld S.K."/>
            <person name="Kurochkin I.V."/>
            <person name="Lareau L.F."/>
            <person name="Lazarevic D."/>
            <person name="Lipovich L."/>
            <person name="Liu J."/>
            <person name="Liuni S."/>
            <person name="McWilliam S."/>
            <person name="Madan Babu M."/>
            <person name="Madera M."/>
            <person name="Marchionni L."/>
            <person name="Matsuda H."/>
            <person name="Matsuzawa S."/>
            <person name="Miki H."/>
            <person name="Mignone F."/>
            <person name="Miyake S."/>
            <person name="Morris K."/>
            <person name="Mottagui-Tabar S."/>
            <person name="Mulder N."/>
            <person name="Nakano N."/>
            <person name="Nakauchi H."/>
            <person name="Ng P."/>
            <person name="Nilsson R."/>
            <person name="Nishiguchi S."/>
            <person name="Nishikawa S."/>
            <person name="Nori F."/>
            <person name="Ohara O."/>
            <person name="Okazaki Y."/>
            <person name="Orlando V."/>
            <person name="Pang K.C."/>
            <person name="Pavan W.J."/>
            <person name="Pavesi G."/>
            <person name="Pesole G."/>
            <person name="Petrovsky N."/>
            <person name="Piazza S."/>
            <person name="Reed J."/>
            <person name="Reid J.F."/>
            <person name="Ring B.Z."/>
            <person name="Ringwald M."/>
            <person name="Rost B."/>
            <person name="Ruan Y."/>
            <person name="Salzberg S.L."/>
            <person name="Sandelin A."/>
            <person name="Schneider C."/>
            <person name="Schoenbach C."/>
            <person name="Sekiguchi K."/>
            <person name="Semple C.A."/>
            <person name="Seno S."/>
            <person name="Sessa L."/>
            <person name="Sheng Y."/>
            <person name="Shibata Y."/>
            <person name="Shimada H."/>
            <person name="Shimada K."/>
            <person name="Silva D."/>
            <person name="Sinclair B."/>
            <person name="Sperling S."/>
            <person name="Stupka E."/>
            <person name="Sugiura K."/>
            <person name="Sultana R."/>
            <person name="Takenaka Y."/>
            <person name="Taki K."/>
            <person name="Tammoja K."/>
            <person name="Tan S.L."/>
            <person name="Tang S."/>
            <person name="Taylor M.S."/>
            <person name="Tegner J."/>
            <person name="Teichmann S.A."/>
            <person name="Ueda H.R."/>
            <person name="van Nimwegen E."/>
            <person name="Verardo R."/>
            <person name="Wei C.L."/>
            <person name="Yagi K."/>
            <person name="Yamanishi H."/>
            <person name="Zabarovsky E."/>
            <person name="Zhu S."/>
            <person name="Zimmer A."/>
            <person name="Hide W."/>
            <person name="Bult C."/>
            <person name="Grimmond S.M."/>
            <person name="Teasdale R.D."/>
            <person name="Liu E.T."/>
            <person name="Brusic V."/>
            <person name="Quackenbush J."/>
            <person name="Wahlestedt C."/>
            <person name="Mattick J.S."/>
            <person name="Hume D.A."/>
            <person name="Kai C."/>
            <person name="Sasaki D."/>
            <person name="Tomaru Y."/>
            <person name="Fukuda S."/>
            <person name="Kanamori-Katayama M."/>
            <person name="Suzuki M."/>
            <person name="Aoki J."/>
            <person name="Arakawa T."/>
            <person name="Iida J."/>
            <person name="Imamura K."/>
            <person name="Itoh M."/>
            <person name="Kato T."/>
            <person name="Kawaji H."/>
            <person name="Kawagashira N."/>
            <person name="Kawashima T."/>
            <person name="Kojima M."/>
            <person name="Kondo S."/>
            <person name="Konno H."/>
            <person name="Nakano K."/>
            <person name="Ninomiya N."/>
            <person name="Nishio T."/>
            <person name="Okada M."/>
            <person name="Plessy C."/>
            <person name="Shibata K."/>
            <person name="Shiraki T."/>
            <person name="Suzuki S."/>
            <person name="Tagami M."/>
            <person name="Waki K."/>
            <person name="Watahiki A."/>
            <person name="Okamura-Oho Y."/>
            <person name="Suzuki H."/>
            <person name="Kawai J."/>
            <person name="Hayashizaki Y."/>
        </authorList>
    </citation>
    <scope>NUCLEOTIDE SEQUENCE [LARGE SCALE MRNA] (ISOFORMS 1; 2 AND 3)</scope>
    <source>
        <strain>C57BL/6J</strain>
        <tissue>Bone marrow</tissue>
        <tissue>Embryo</tissue>
        <tissue>Testis</tissue>
    </source>
</reference>
<reference key="3">
    <citation type="journal article" date="2009" name="PLoS Biol.">
        <title>Lineage-specific biology revealed by a finished genome assembly of the mouse.</title>
        <authorList>
            <person name="Church D.M."/>
            <person name="Goodstadt L."/>
            <person name="Hillier L.W."/>
            <person name="Zody M.C."/>
            <person name="Goldstein S."/>
            <person name="She X."/>
            <person name="Bult C.J."/>
            <person name="Agarwala R."/>
            <person name="Cherry J.L."/>
            <person name="DiCuccio M."/>
            <person name="Hlavina W."/>
            <person name="Kapustin Y."/>
            <person name="Meric P."/>
            <person name="Maglott D."/>
            <person name="Birtle Z."/>
            <person name="Marques A.C."/>
            <person name="Graves T."/>
            <person name="Zhou S."/>
            <person name="Teague B."/>
            <person name="Potamousis K."/>
            <person name="Churas C."/>
            <person name="Place M."/>
            <person name="Herschleb J."/>
            <person name="Runnheim R."/>
            <person name="Forrest D."/>
            <person name="Amos-Landgraf J."/>
            <person name="Schwartz D.C."/>
            <person name="Cheng Z."/>
            <person name="Lindblad-Toh K."/>
            <person name="Eichler E.E."/>
            <person name="Ponting C.P."/>
        </authorList>
    </citation>
    <scope>NUCLEOTIDE SEQUENCE [LARGE SCALE GENOMIC DNA]</scope>
    <source>
        <strain>C57BL/6J</strain>
    </source>
</reference>
<reference key="4">
    <citation type="journal article" date="2007" name="Am. J. Hum. Genet.">
        <title>A mutation in CCDC50, a gene encoding an effector of epidermal growth factor-mediated cell signaling, causes progressive hearing loss.</title>
        <authorList>
            <person name="Modamio-Hoeybjoer S."/>
            <person name="Mencia A."/>
            <person name="Goodyear R."/>
            <person name="del Castillo I."/>
            <person name="Richardson G."/>
            <person name="Moreno F."/>
            <person name="Moreno-Pelayo M.A."/>
        </authorList>
    </citation>
    <scope>SUBCELLULAR LOCATION</scope>
    <scope>TISSUE SPECIFICITY</scope>
    <scope>DEVELOPMENTAL STAGE</scope>
</reference>
<reference key="5">
    <citation type="journal article" date="2010" name="Cell">
        <title>A tissue-specific atlas of mouse protein phosphorylation and expression.</title>
        <authorList>
            <person name="Huttlin E.L."/>
            <person name="Jedrychowski M.P."/>
            <person name="Elias J.E."/>
            <person name="Goswami T."/>
            <person name="Rad R."/>
            <person name="Beausoleil S.A."/>
            <person name="Villen J."/>
            <person name="Haas W."/>
            <person name="Sowa M.E."/>
            <person name="Gygi S.P."/>
        </authorList>
    </citation>
    <scope>IDENTIFICATION BY MASS SPECTROMETRY [LARGE SCALE ANALYSIS]</scope>
    <source>
        <tissue>Brain</tissue>
        <tissue>Kidney</tissue>
        <tissue>Lung</tissue>
        <tissue>Pancreas</tissue>
        <tissue>Spleen</tissue>
        <tissue>Testis</tissue>
    </source>
</reference>
<reference key="6">
    <citation type="journal article" date="2013" name="J. Cell Sci.">
        <title>The E3 ubiquitin ligases RNF126 and Rabring7 regulate endosomal sorting of the epidermal growth factor receptor.</title>
        <authorList>
            <person name="Smith C.J."/>
            <person name="Berry D.M."/>
            <person name="McGlade C.J."/>
        </authorList>
    </citation>
    <scope>INTERACTION WITH RNF126</scope>
</reference>
<gene>
    <name type="primary">Ccdc50</name>
</gene>
<keyword id="KW-0007">Acetylation</keyword>
<keyword id="KW-0025">Alternative splicing</keyword>
<keyword id="KW-0175">Coiled coil</keyword>
<keyword id="KW-0963">Cytoplasm</keyword>
<keyword id="KW-0597">Phosphoprotein</keyword>
<keyword id="KW-1185">Reference proteome</keyword>
<evidence type="ECO:0000250" key="1"/>
<evidence type="ECO:0000250" key="2">
    <source>
        <dbReference type="UniProtKB" id="Q8IVM0"/>
    </source>
</evidence>
<evidence type="ECO:0000255" key="3"/>
<evidence type="ECO:0000256" key="4">
    <source>
        <dbReference type="SAM" id="MobiDB-lite"/>
    </source>
</evidence>
<evidence type="ECO:0000269" key="5">
    <source>
    </source>
</evidence>
<evidence type="ECO:0000269" key="6">
    <source>
    </source>
</evidence>
<evidence type="ECO:0000303" key="7">
    <source>
    </source>
</evidence>
<evidence type="ECO:0000305" key="8"/>
<name>CCD50_MOUSE</name>
<accession>Q810U5</accession>
<accession>A6X929</accession>
<accession>Q3TRW1</accession>
<accession>Q8BP82</accession>
<accession>Q9CZT1</accession>
<accession>Q9D436</accession>